<protein>
    <recommendedName>
        <fullName>Membrane protein insertase YidC</fullName>
    </recommendedName>
    <alternativeName>
        <fullName>Foldase YidC</fullName>
    </alternativeName>
    <alternativeName>
        <fullName>Membrane integrase YidC</fullName>
    </alternativeName>
    <alternativeName>
        <fullName>Membrane protein YidC</fullName>
    </alternativeName>
</protein>
<dbReference type="EMBL" id="U00089">
    <property type="protein sequence ID" value="AAB95810.1"/>
    <property type="molecule type" value="Genomic_DNA"/>
</dbReference>
<dbReference type="PIR" id="S73488">
    <property type="entry name" value="S73488"/>
</dbReference>
<dbReference type="RefSeq" id="NP_110369.1">
    <property type="nucleotide sequence ID" value="NC_000912.1"/>
</dbReference>
<dbReference type="RefSeq" id="WP_010875037.1">
    <property type="nucleotide sequence ID" value="NZ_OU342337.1"/>
</dbReference>
<dbReference type="STRING" id="272634.MPN_680"/>
<dbReference type="EnsemblBacteria" id="AAB95810">
    <property type="protein sequence ID" value="AAB95810"/>
    <property type="gene ID" value="MPN_680"/>
</dbReference>
<dbReference type="GeneID" id="66608632"/>
<dbReference type="KEGG" id="mpn:MPN_680"/>
<dbReference type="PATRIC" id="fig|272634.6.peg.747"/>
<dbReference type="HOGENOM" id="CLU_058030_0_0_14"/>
<dbReference type="OrthoDB" id="394558at2"/>
<dbReference type="BioCyc" id="MPNE272634:G1GJ3-1089-MONOMER"/>
<dbReference type="Proteomes" id="UP000000808">
    <property type="component" value="Chromosome"/>
</dbReference>
<dbReference type="GO" id="GO:0005886">
    <property type="term" value="C:plasma membrane"/>
    <property type="evidence" value="ECO:0007669"/>
    <property type="project" value="UniProtKB-SubCell"/>
</dbReference>
<dbReference type="GO" id="GO:0032977">
    <property type="term" value="F:membrane insertase activity"/>
    <property type="evidence" value="ECO:0007669"/>
    <property type="project" value="InterPro"/>
</dbReference>
<dbReference type="GO" id="GO:0051205">
    <property type="term" value="P:protein insertion into membrane"/>
    <property type="evidence" value="ECO:0007669"/>
    <property type="project" value="TreeGrafter"/>
</dbReference>
<dbReference type="GO" id="GO:0015031">
    <property type="term" value="P:protein transport"/>
    <property type="evidence" value="ECO:0007669"/>
    <property type="project" value="UniProtKB-KW"/>
</dbReference>
<dbReference type="CDD" id="cd20070">
    <property type="entry name" value="5TM_YidC_Alb3"/>
    <property type="match status" value="1"/>
</dbReference>
<dbReference type="InterPro" id="IPR001708">
    <property type="entry name" value="YidC/ALB3/OXA1/COX18"/>
</dbReference>
<dbReference type="InterPro" id="IPR028055">
    <property type="entry name" value="YidC/Oxa/ALB_C"/>
</dbReference>
<dbReference type="InterPro" id="IPR047196">
    <property type="entry name" value="YidC_ALB_C"/>
</dbReference>
<dbReference type="NCBIfam" id="NF002566">
    <property type="entry name" value="PRK02201.1-1"/>
    <property type="match status" value="1"/>
</dbReference>
<dbReference type="NCBIfam" id="TIGR03592">
    <property type="entry name" value="yidC_oxa1_cterm"/>
    <property type="match status" value="1"/>
</dbReference>
<dbReference type="PANTHER" id="PTHR12428:SF65">
    <property type="entry name" value="CYTOCHROME C OXIDASE ASSEMBLY PROTEIN COX18, MITOCHONDRIAL"/>
    <property type="match status" value="1"/>
</dbReference>
<dbReference type="PANTHER" id="PTHR12428">
    <property type="entry name" value="OXA1"/>
    <property type="match status" value="1"/>
</dbReference>
<dbReference type="Pfam" id="PF02096">
    <property type="entry name" value="60KD_IMP"/>
    <property type="match status" value="1"/>
</dbReference>
<evidence type="ECO:0000250" key="1"/>
<evidence type="ECO:0000255" key="2"/>
<evidence type="ECO:0000305" key="3"/>
<reference key="1">
    <citation type="journal article" date="1996" name="Nucleic Acids Res.">
        <title>Complete sequence analysis of the genome of the bacterium Mycoplasma pneumoniae.</title>
        <authorList>
            <person name="Himmelreich R."/>
            <person name="Hilbert H."/>
            <person name="Plagens H."/>
            <person name="Pirkl E."/>
            <person name="Li B.-C."/>
            <person name="Herrmann R."/>
        </authorList>
    </citation>
    <scope>NUCLEOTIDE SEQUENCE [LARGE SCALE GENOMIC DNA]</scope>
    <source>
        <strain>ATCC 29342 / M129 / Subtype 1</strain>
    </source>
</reference>
<sequence length="385" mass="44239">MPLNLNKKHKELKTTFNPFWSAAVVNEKNGLKNLKKAWGIIFKVLKVAIFIFLTIVGLWGCTQTLAQPWTGTNQLLGSGLEIGYNFGTTGDYRYDLQSNNVGPYFTFSDYTLAYGPFYGWFVWPASQIVLPIMYATRVPLGSGPELGFNMILSLIVLLFLVRLITIVITLNSTLALEKMNEVQGKLAEINAKYKGALDLQSKRNRQMEIMSLYKKHNIKSSASFVQVFVTLPIFLIIYRIVTTLRPIKAIILFNFWDLSKVPLTEIFSNFTSTGWTFIIFLIIVLPVQFISQKLPQIWASKRNENAKAHSQKSIEQLNKTKRMQLIFYFVFAVITAFSAAGVGVYWFLNALFTLLQSYLTHLFIVKRRTRRRLTYSKLEQMLERE</sequence>
<feature type="chain" id="PRO_0000124728" description="Membrane protein insertase YidC">
    <location>
        <begin position="1"/>
        <end position="385"/>
    </location>
</feature>
<feature type="transmembrane region" description="Helical" evidence="2">
    <location>
        <begin position="38"/>
        <end position="58"/>
    </location>
</feature>
<feature type="transmembrane region" description="Helical" evidence="2">
    <location>
        <begin position="112"/>
        <end position="132"/>
    </location>
</feature>
<feature type="transmembrane region" description="Helical" evidence="2">
    <location>
        <begin position="150"/>
        <end position="170"/>
    </location>
</feature>
<feature type="transmembrane region" description="Helical" evidence="2">
    <location>
        <begin position="224"/>
        <end position="244"/>
    </location>
</feature>
<feature type="transmembrane region" description="Helical" evidence="2">
    <location>
        <begin position="247"/>
        <end position="267"/>
    </location>
</feature>
<feature type="transmembrane region" description="Helical" evidence="2">
    <location>
        <begin position="270"/>
        <end position="290"/>
    </location>
</feature>
<feature type="transmembrane region" description="Helical" evidence="2">
    <location>
        <begin position="325"/>
        <end position="345"/>
    </location>
</feature>
<feature type="transmembrane region" description="Helical" evidence="2">
    <location>
        <begin position="346"/>
        <end position="366"/>
    </location>
</feature>
<name>YIDC_MYCPN</name>
<keyword id="KW-1003">Cell membrane</keyword>
<keyword id="KW-0143">Chaperone</keyword>
<keyword id="KW-0472">Membrane</keyword>
<keyword id="KW-0653">Protein transport</keyword>
<keyword id="KW-1185">Reference proteome</keyword>
<keyword id="KW-0812">Transmembrane</keyword>
<keyword id="KW-1133">Transmembrane helix</keyword>
<keyword id="KW-0813">Transport</keyword>
<accession>P75112</accession>
<proteinExistence type="inferred from homology"/>
<organism>
    <name type="scientific">Mycoplasma pneumoniae (strain ATCC 29342 / M129 / Subtype 1)</name>
    <name type="common">Mycoplasmoides pneumoniae</name>
    <dbReference type="NCBI Taxonomy" id="272634"/>
    <lineage>
        <taxon>Bacteria</taxon>
        <taxon>Bacillati</taxon>
        <taxon>Mycoplasmatota</taxon>
        <taxon>Mycoplasmoidales</taxon>
        <taxon>Mycoplasmoidaceae</taxon>
        <taxon>Mycoplasmoides</taxon>
    </lineage>
</organism>
<comment type="function">
    <text evidence="1">Required for the insertion and/or proper folding and/or complex formation of integral membrane proteins into the membrane. Involved in integration of membrane proteins that insert both dependently and independently of the Sec translocase complex, as well as at least some lipoproteins. Aids folding of multispanning membrane proteins (By similarity).</text>
</comment>
<comment type="subunit">
    <text evidence="1">Interacts with the Sec translocase complex via SecD. Specifically interacts with transmembrane segments of nascent integral membrane proteins during membrane integration (By similarity).</text>
</comment>
<comment type="subcellular location">
    <subcellularLocation>
        <location evidence="1">Cell membrane</location>
        <topology evidence="1">Multi-pass membrane protein</topology>
    </subcellularLocation>
</comment>
<comment type="similarity">
    <text evidence="3">Belongs to the OXA1/ALB3/YidC family. Type 1 subfamily.</text>
</comment>
<gene>
    <name type="primary">yidC</name>
    <name type="ordered locus">MPN_680</name>
    <name type="ORF">MP162</name>
</gene>